<evidence type="ECO:0000250" key="1"/>
<evidence type="ECO:0000255" key="2"/>
<reference key="1">
    <citation type="journal article" date="1983" name="Proc. Natl. Acad. Sci. U.S.A.">
        <title>Human adult T-cell leukemia virus: complete nucleotide sequence of the provirus genome integrated in leukemia cell DNA.</title>
        <authorList>
            <person name="Seiki M."/>
            <person name="Hattori S."/>
            <person name="Hirayama Y."/>
            <person name="Yoshida M.C."/>
        </authorList>
    </citation>
    <scope>NUCLEOTIDE SEQUENCE [GENOMIC DNA]</scope>
</reference>
<sequence>MGKFLATLILFFQFCPLIFGDYSPSCCTLTIGVSSYHSKPCNPAQPVCSWTLDLLALSADQALQPPCPNLVSYSSYHATYSLYLFPHWTKKPNRNGGGYYSASYSDPCSLKCPYLGCQSWTCPYTGAVSSPYWKFQHDVNFTQEVSRLNINLHFSKCGFPFSLLVDAPGYDPIWFLNTEPSQLPPTAPPLLPHSNLDHILEPSIPWKSKLLTLVQLTLQSTNYTCIVCIDRASLSTWHVLYSPNVSVPSSSSTPLLYPSLALPAPHLTLPFNWTHCFDPQIQAIVSSPCHNSLILPPFSLSPVPTLGSRSRRAVPVAVWLVSALAMGAGVAGGITGSMSLASGKSLLHEVDKDISQLTQAIVKNHKNLLKIAQYAAQNRRGLDLLFWEQGGLCKALQEQCRFPNITNSHVPILQERPPLENRVLTGWGLNWDLGLSQWAREALQTGITLVALLLLVILAGPCILRQLRHLPSRVRYPHYSLIKPESSL</sequence>
<comment type="function">
    <text evidence="1">The surface protein (SU) attaches the virus to the host cell by binding to its receptor. This interaction triggers the refolding of the transmembrane protein (TM) and is thought to activate its fusogenic potential by unmasking its fusion peptide. Fusion occurs at the host cell plasma membrane (By similarity).</text>
</comment>
<comment type="function">
    <text evidence="1">The transmembrane protein (TM) acts as a class I viral fusion protein. Under the current model, the protein has at least 3 conformational states: pre-fusion native state, pre-hairpin intermediate state, and post-fusion hairpin state. During viral and target cell membrane fusion, the coiled coil regions (heptad repeats) assume a trimer-of-hairpins structure, positioning the fusion peptide in close proximity to the C-terminal region of the ectodomain. The formation of this structure appears to drive apposition and subsequent fusion of viral and target cell membranes. Membranes fusion leads to delivery of the nucleocapsid into the cytoplasm (By similarity).</text>
</comment>
<comment type="subunit">
    <text evidence="1">The mature envelope protein (Env) consists of a trimer of SU-TM heterodimers attached by non-covalent interactions or by a labile interchain disulfide bond.</text>
</comment>
<comment type="subcellular location">
    <molecule>Transmembrane protein</molecule>
    <subcellularLocation>
        <location evidence="1">Virion membrane</location>
        <topology evidence="1">Single-pass type I membrane protein</topology>
    </subcellularLocation>
    <subcellularLocation>
        <location evidence="1">Host cell membrane</location>
        <topology evidence="1">Single-pass type I membrane protein</topology>
    </subcellularLocation>
    <text evidence="1">It is probably concentrated at the site of budding and incorporated into the virions possibly by contacts between the cytoplasmic tail of Env and the N-terminus of Gag.</text>
</comment>
<comment type="subcellular location">
    <molecule>Surface protein</molecule>
    <subcellularLocation>
        <location evidence="1">Virion membrane</location>
        <topology evidence="1">Peripheral membrane protein</topology>
    </subcellularLocation>
    <subcellularLocation>
        <location evidence="1">Host cell membrane</location>
        <topology evidence="1">Peripheral membrane protein</topology>
    </subcellularLocation>
    <text evidence="1">The surface protein is not anchored to the viral envelope, but associates with the extravirion surface through its binding to TM. It is probably concentrated at the site of budding and incorporated into the virions possibly by contacts between the cytoplasmic tail of Env and the N-terminus of Gag (By similarity).</text>
</comment>
<comment type="domain">
    <text evidence="1">The 17 amino acids long immunosuppressive region is present in many retroviral envelope proteins. Synthetic peptides derived from this relatively conserved sequence inhibit immune function in vitro and in vivo (By similarity).</text>
</comment>
<comment type="PTM">
    <text evidence="1">Specific enzymatic cleavages in vivo yield mature proteins. Envelope glycoproteins are synthesized as an inactive precursor that is N-glycosylated and processed likely by host cell furin or by a furin-like protease in the Golgi to yield the mature SU and TM proteins. The cleavage site between SU and TM requires the minimal sequence [KR]-X-[KR]-R (By similarity).</text>
</comment>
<comment type="PTM">
    <text evidence="1">The transmembrane protein is palmitoylated.</text>
</comment>
<comment type="miscellaneous">
    <text>HTLV-1 lineages are divided in four clades, A (Cosmopolitan), B (Central African group), C (Melanesian group) and D (New Central African group).</text>
</comment>
<name>ENV_HTL1A</name>
<gene>
    <name type="primary">env</name>
</gene>
<accession>P03381</accession>
<organismHost>
    <name type="scientific">Homo sapiens</name>
    <name type="common">Human</name>
    <dbReference type="NCBI Taxonomy" id="9606"/>
</organismHost>
<feature type="signal peptide" evidence="2">
    <location>
        <begin position="1"/>
        <end position="20"/>
    </location>
</feature>
<feature type="chain" id="PRO_0000038746" description="Envelope glycoprotein gp62">
    <location>
        <begin position="21"/>
        <end position="488"/>
    </location>
</feature>
<feature type="chain" id="PRO_0000038747" description="Surface protein" evidence="1">
    <location>
        <begin position="21"/>
        <end position="312"/>
    </location>
</feature>
<feature type="chain" id="PRO_0000038748" description="Transmembrane protein" evidence="1">
    <location>
        <begin position="313"/>
        <end position="488"/>
    </location>
</feature>
<feature type="topological domain" description="Extracellular" evidence="2">
    <location>
        <begin position="21"/>
        <end position="442"/>
    </location>
</feature>
<feature type="transmembrane region" description="Helical" evidence="2">
    <location>
        <begin position="443"/>
        <end position="463"/>
    </location>
</feature>
<feature type="topological domain" description="Cytoplasmic" evidence="2">
    <location>
        <begin position="464"/>
        <end position="488"/>
    </location>
</feature>
<feature type="region of interest" description="Fusion peptide" evidence="2">
    <location>
        <begin position="313"/>
        <end position="333"/>
    </location>
</feature>
<feature type="region of interest" description="Immunosuppression" evidence="1">
    <location>
        <begin position="376"/>
        <end position="392"/>
    </location>
</feature>
<feature type="coiled-coil region" evidence="2">
    <location>
        <begin position="341"/>
        <end position="387"/>
    </location>
</feature>
<feature type="coiled-coil region" evidence="2">
    <location>
        <begin position="397"/>
        <end position="429"/>
    </location>
</feature>
<feature type="short sequence motif" description="CXXC">
    <location>
        <begin position="225"/>
        <end position="228"/>
    </location>
</feature>
<feature type="site" description="Cleavage; by host furin" evidence="1">
    <location>
        <begin position="312"/>
        <end position="313"/>
    </location>
</feature>
<feature type="lipid moiety-binding region" description="S-palmitoyl cysteine; by host" evidence="1">
    <location>
        <position position="462"/>
    </location>
</feature>
<feature type="glycosylation site" description="N-linked (GlcNAc...) asparagine; by host" evidence="2">
    <location>
        <position position="140"/>
    </location>
</feature>
<feature type="glycosylation site" description="N-linked (GlcNAc...) asparagine; by host" evidence="2">
    <location>
        <position position="222"/>
    </location>
</feature>
<feature type="glycosylation site" description="N-linked (GlcNAc...) asparagine; by host" evidence="2">
    <location>
        <position position="244"/>
    </location>
</feature>
<feature type="glycosylation site" description="N-linked (GlcNAc...) asparagine; by host" evidence="2">
    <location>
        <position position="272"/>
    </location>
</feature>
<feature type="glycosylation site" description="N-linked (GlcNAc...) asparagine; by host" evidence="2">
    <location>
        <position position="404"/>
    </location>
</feature>
<feature type="disulfide bond" evidence="1">
    <location>
        <begin position="393"/>
        <end position="400"/>
    </location>
</feature>
<protein>
    <recommendedName>
        <fullName>Envelope glycoprotein gp62</fullName>
    </recommendedName>
    <alternativeName>
        <fullName>Env polyprotein</fullName>
    </alternativeName>
    <component>
        <recommendedName>
            <fullName>Surface protein</fullName>
            <shortName>SU</shortName>
        </recommendedName>
        <alternativeName>
            <fullName>Glycoprotein 46</fullName>
            <shortName>gp46</shortName>
        </alternativeName>
    </component>
    <component>
        <recommendedName>
            <fullName>Transmembrane protein</fullName>
            <shortName>TM</shortName>
        </recommendedName>
        <alternativeName>
            <fullName>Glycoprotein 21</fullName>
            <shortName>gp21</shortName>
        </alternativeName>
    </component>
</protein>
<proteinExistence type="inferred from homology"/>
<organism>
    <name type="scientific">Human T-cell leukemia virus 1 (strain Japan ATK-1 subtype A)</name>
    <name type="common">HTLV-1</name>
    <dbReference type="NCBI Taxonomy" id="11926"/>
    <lineage>
        <taxon>Viruses</taxon>
        <taxon>Riboviria</taxon>
        <taxon>Pararnavirae</taxon>
        <taxon>Artverviricota</taxon>
        <taxon>Revtraviricetes</taxon>
        <taxon>Ortervirales</taxon>
        <taxon>Retroviridae</taxon>
        <taxon>Orthoretrovirinae</taxon>
        <taxon>Deltaretrovirus</taxon>
        <taxon>Primate T-lymphotropic virus 1</taxon>
    </lineage>
</organism>
<dbReference type="EMBL" id="J02029">
    <property type="protein sequence ID" value="AAA96674.1"/>
    <property type="molecule type" value="Genomic_DNA"/>
</dbReference>
<dbReference type="PIR" id="A03979">
    <property type="entry name" value="VCVWH"/>
</dbReference>
<dbReference type="SMR" id="P03381"/>
<dbReference type="GlyCosmos" id="P03381">
    <property type="glycosylation" value="5 sites, No reported glycans"/>
</dbReference>
<dbReference type="Proteomes" id="UP000007683">
    <property type="component" value="Segment"/>
</dbReference>
<dbReference type="GO" id="GO:0020002">
    <property type="term" value="C:host cell plasma membrane"/>
    <property type="evidence" value="ECO:0007669"/>
    <property type="project" value="UniProtKB-SubCell"/>
</dbReference>
<dbReference type="GO" id="GO:0016020">
    <property type="term" value="C:membrane"/>
    <property type="evidence" value="ECO:0007669"/>
    <property type="project" value="UniProtKB-KW"/>
</dbReference>
<dbReference type="GO" id="GO:0019031">
    <property type="term" value="C:viral envelope"/>
    <property type="evidence" value="ECO:0007669"/>
    <property type="project" value="UniProtKB-KW"/>
</dbReference>
<dbReference type="GO" id="GO:0055036">
    <property type="term" value="C:virion membrane"/>
    <property type="evidence" value="ECO:0007669"/>
    <property type="project" value="UniProtKB-SubCell"/>
</dbReference>
<dbReference type="GO" id="GO:0019064">
    <property type="term" value="P:fusion of virus membrane with host plasma membrane"/>
    <property type="evidence" value="ECO:0007669"/>
    <property type="project" value="UniProtKB-KW"/>
</dbReference>
<dbReference type="GO" id="GO:0046718">
    <property type="term" value="P:symbiont entry into host cell"/>
    <property type="evidence" value="ECO:0007669"/>
    <property type="project" value="UniProtKB-KW"/>
</dbReference>
<dbReference type="GO" id="GO:0019062">
    <property type="term" value="P:virion attachment to host cell"/>
    <property type="evidence" value="ECO:0007669"/>
    <property type="project" value="UniProtKB-KW"/>
</dbReference>
<dbReference type="CDD" id="cd09851">
    <property type="entry name" value="HTLV-1-like_HR1-HR2"/>
    <property type="match status" value="1"/>
</dbReference>
<dbReference type="Gene3D" id="1.10.287.210">
    <property type="match status" value="1"/>
</dbReference>
<dbReference type="InterPro" id="IPR018154">
    <property type="entry name" value="TLV/ENV_coat_polyprotein"/>
</dbReference>
<dbReference type="PANTHER" id="PTHR10424:SF81">
    <property type="entry name" value="ERVV2 PROTEIN"/>
    <property type="match status" value="1"/>
</dbReference>
<dbReference type="PANTHER" id="PTHR10424">
    <property type="entry name" value="VIRAL ENVELOPE PROTEIN"/>
    <property type="match status" value="1"/>
</dbReference>
<dbReference type="Pfam" id="PF00429">
    <property type="entry name" value="TLV_coat"/>
    <property type="match status" value="1"/>
</dbReference>
<dbReference type="SUPFAM" id="SSF58069">
    <property type="entry name" value="Virus ectodomain"/>
    <property type="match status" value="1"/>
</dbReference>
<keyword id="KW-0165">Cleavage on pair of basic residues</keyword>
<keyword id="KW-0175">Coiled coil</keyword>
<keyword id="KW-1015">Disulfide bond</keyword>
<keyword id="KW-1169">Fusion of virus membrane with host cell membrane</keyword>
<keyword id="KW-1168">Fusion of virus membrane with host membrane</keyword>
<keyword id="KW-0325">Glycoprotein</keyword>
<keyword id="KW-1032">Host cell membrane</keyword>
<keyword id="KW-1043">Host membrane</keyword>
<keyword id="KW-0945">Host-virus interaction</keyword>
<keyword id="KW-0449">Lipoprotein</keyword>
<keyword id="KW-0472">Membrane</keyword>
<keyword id="KW-0564">Palmitate</keyword>
<keyword id="KW-1185">Reference proteome</keyword>
<keyword id="KW-0732">Signal</keyword>
<keyword id="KW-0812">Transmembrane</keyword>
<keyword id="KW-1133">Transmembrane helix</keyword>
<keyword id="KW-1161">Viral attachment to host cell</keyword>
<keyword id="KW-0261">Viral envelope protein</keyword>
<keyword id="KW-1162">Viral penetration into host cytoplasm</keyword>
<keyword id="KW-0946">Virion</keyword>
<keyword id="KW-1160">Virus entry into host cell</keyword>